<feature type="chain" id="PRO_0000057314" description="tRNA pseudouridine synthase A">
    <location>
        <begin position="1"/>
        <end position="266"/>
    </location>
</feature>
<feature type="active site" description="Nucleophile" evidence="1">
    <location>
        <position position="52"/>
    </location>
</feature>
<feature type="binding site" evidence="1">
    <location>
        <position position="113"/>
    </location>
    <ligand>
        <name>substrate</name>
    </ligand>
</feature>
<name>TRUA_AGRFC</name>
<comment type="function">
    <text evidence="1">Formation of pseudouridine at positions 38, 39 and 40 in the anticodon stem and loop of transfer RNAs.</text>
</comment>
<comment type="catalytic activity">
    <reaction evidence="1">
        <text>uridine(38/39/40) in tRNA = pseudouridine(38/39/40) in tRNA</text>
        <dbReference type="Rhea" id="RHEA:22376"/>
        <dbReference type="Rhea" id="RHEA-COMP:10085"/>
        <dbReference type="Rhea" id="RHEA-COMP:10087"/>
        <dbReference type="ChEBI" id="CHEBI:65314"/>
        <dbReference type="ChEBI" id="CHEBI:65315"/>
        <dbReference type="EC" id="5.4.99.12"/>
    </reaction>
</comment>
<comment type="subunit">
    <text evidence="1">Homodimer.</text>
</comment>
<comment type="similarity">
    <text evidence="1">Belongs to the tRNA pseudouridine synthase TruA family.</text>
</comment>
<protein>
    <recommendedName>
        <fullName evidence="1">tRNA pseudouridine synthase A</fullName>
        <ecNumber evidence="1">5.4.99.12</ecNumber>
    </recommendedName>
    <alternativeName>
        <fullName evidence="1">tRNA pseudouridine(38-40) synthase</fullName>
    </alternativeName>
    <alternativeName>
        <fullName evidence="1">tRNA pseudouridylate synthase I</fullName>
    </alternativeName>
    <alternativeName>
        <fullName evidence="1">tRNA-uridine isomerase I</fullName>
    </alternativeName>
</protein>
<reference key="1">
    <citation type="journal article" date="2001" name="Science">
        <title>The genome of the natural genetic engineer Agrobacterium tumefaciens C58.</title>
        <authorList>
            <person name="Wood D.W."/>
            <person name="Setubal J.C."/>
            <person name="Kaul R."/>
            <person name="Monks D.E."/>
            <person name="Kitajima J.P."/>
            <person name="Okura V.K."/>
            <person name="Zhou Y."/>
            <person name="Chen L."/>
            <person name="Wood G.E."/>
            <person name="Almeida N.F. Jr."/>
            <person name="Woo L."/>
            <person name="Chen Y."/>
            <person name="Paulsen I.T."/>
            <person name="Eisen J.A."/>
            <person name="Karp P.D."/>
            <person name="Bovee D. Sr."/>
            <person name="Chapman P."/>
            <person name="Clendenning J."/>
            <person name="Deatherage G."/>
            <person name="Gillet W."/>
            <person name="Grant C."/>
            <person name="Kutyavin T."/>
            <person name="Levy R."/>
            <person name="Li M.-J."/>
            <person name="McClelland E."/>
            <person name="Palmieri A."/>
            <person name="Raymond C."/>
            <person name="Rouse G."/>
            <person name="Saenphimmachak C."/>
            <person name="Wu Z."/>
            <person name="Romero P."/>
            <person name="Gordon D."/>
            <person name="Zhang S."/>
            <person name="Yoo H."/>
            <person name="Tao Y."/>
            <person name="Biddle P."/>
            <person name="Jung M."/>
            <person name="Krespan W."/>
            <person name="Perry M."/>
            <person name="Gordon-Kamm B."/>
            <person name="Liao L."/>
            <person name="Kim S."/>
            <person name="Hendrick C."/>
            <person name="Zhao Z.-Y."/>
            <person name="Dolan M."/>
            <person name="Chumley F."/>
            <person name="Tingey S.V."/>
            <person name="Tomb J.-F."/>
            <person name="Gordon M.P."/>
            <person name="Olson M.V."/>
            <person name="Nester E.W."/>
        </authorList>
    </citation>
    <scope>NUCLEOTIDE SEQUENCE [LARGE SCALE GENOMIC DNA]</scope>
    <source>
        <strain>C58 / ATCC 33970</strain>
    </source>
</reference>
<reference key="2">
    <citation type="journal article" date="2001" name="Science">
        <title>Genome sequence of the plant pathogen and biotechnology agent Agrobacterium tumefaciens C58.</title>
        <authorList>
            <person name="Goodner B."/>
            <person name="Hinkle G."/>
            <person name="Gattung S."/>
            <person name="Miller N."/>
            <person name="Blanchard M."/>
            <person name="Qurollo B."/>
            <person name="Goldman B.S."/>
            <person name="Cao Y."/>
            <person name="Askenazi M."/>
            <person name="Halling C."/>
            <person name="Mullin L."/>
            <person name="Houmiel K."/>
            <person name="Gordon J."/>
            <person name="Vaudin M."/>
            <person name="Iartchouk O."/>
            <person name="Epp A."/>
            <person name="Liu F."/>
            <person name="Wollam C."/>
            <person name="Allinger M."/>
            <person name="Doughty D."/>
            <person name="Scott C."/>
            <person name="Lappas C."/>
            <person name="Markelz B."/>
            <person name="Flanagan C."/>
            <person name="Crowell C."/>
            <person name="Gurson J."/>
            <person name="Lomo C."/>
            <person name="Sear C."/>
            <person name="Strub G."/>
            <person name="Cielo C."/>
            <person name="Slater S."/>
        </authorList>
    </citation>
    <scope>NUCLEOTIDE SEQUENCE [LARGE SCALE GENOMIC DNA]</scope>
    <source>
        <strain>C58 / ATCC 33970</strain>
    </source>
</reference>
<gene>
    <name evidence="1" type="primary">truA</name>
    <name type="ordered locus">Atu0368</name>
    <name type="ORF">AGR_C_644</name>
</gene>
<dbReference type="EC" id="5.4.99.12" evidence="1"/>
<dbReference type="EMBL" id="AE007869">
    <property type="protein sequence ID" value="AAK86185.1"/>
    <property type="molecule type" value="Genomic_DNA"/>
</dbReference>
<dbReference type="PIR" id="AH2621">
    <property type="entry name" value="AH2621"/>
</dbReference>
<dbReference type="PIR" id="H97403">
    <property type="entry name" value="H97403"/>
</dbReference>
<dbReference type="RefSeq" id="NP_353400.1">
    <property type="nucleotide sequence ID" value="NC_003062.2"/>
</dbReference>
<dbReference type="RefSeq" id="WP_010970846.1">
    <property type="nucleotide sequence ID" value="NC_003062.2"/>
</dbReference>
<dbReference type="SMR" id="Q8UIC9"/>
<dbReference type="STRING" id="176299.Atu0368"/>
<dbReference type="EnsemblBacteria" id="AAK86185">
    <property type="protein sequence ID" value="AAK86185"/>
    <property type="gene ID" value="Atu0368"/>
</dbReference>
<dbReference type="GeneID" id="1132406"/>
<dbReference type="KEGG" id="atu:Atu0368"/>
<dbReference type="PATRIC" id="fig|176299.10.peg.359"/>
<dbReference type="eggNOG" id="COG0101">
    <property type="taxonomic scope" value="Bacteria"/>
</dbReference>
<dbReference type="HOGENOM" id="CLU_014673_0_2_5"/>
<dbReference type="OrthoDB" id="9811823at2"/>
<dbReference type="PhylomeDB" id="Q8UIC9"/>
<dbReference type="BioCyc" id="AGRO:ATU0368-MONOMER"/>
<dbReference type="Proteomes" id="UP000000813">
    <property type="component" value="Chromosome circular"/>
</dbReference>
<dbReference type="GO" id="GO:0003723">
    <property type="term" value="F:RNA binding"/>
    <property type="evidence" value="ECO:0007669"/>
    <property type="project" value="InterPro"/>
</dbReference>
<dbReference type="GO" id="GO:0160147">
    <property type="term" value="F:tRNA pseudouridine(38-40) synthase activity"/>
    <property type="evidence" value="ECO:0007669"/>
    <property type="project" value="UniProtKB-EC"/>
</dbReference>
<dbReference type="GO" id="GO:0031119">
    <property type="term" value="P:tRNA pseudouridine synthesis"/>
    <property type="evidence" value="ECO:0007669"/>
    <property type="project" value="UniProtKB-UniRule"/>
</dbReference>
<dbReference type="CDD" id="cd02570">
    <property type="entry name" value="PseudoU_synth_EcTruA"/>
    <property type="match status" value="1"/>
</dbReference>
<dbReference type="FunFam" id="3.30.70.580:FF:000001">
    <property type="entry name" value="tRNA pseudouridine synthase A"/>
    <property type="match status" value="1"/>
</dbReference>
<dbReference type="Gene3D" id="3.30.70.660">
    <property type="entry name" value="Pseudouridine synthase I, catalytic domain, C-terminal subdomain"/>
    <property type="match status" value="1"/>
</dbReference>
<dbReference type="Gene3D" id="3.30.70.580">
    <property type="entry name" value="Pseudouridine synthase I, catalytic domain, N-terminal subdomain"/>
    <property type="match status" value="1"/>
</dbReference>
<dbReference type="HAMAP" id="MF_00171">
    <property type="entry name" value="TruA"/>
    <property type="match status" value="1"/>
</dbReference>
<dbReference type="InterPro" id="IPR020103">
    <property type="entry name" value="PsdUridine_synth_cat_dom_sf"/>
</dbReference>
<dbReference type="InterPro" id="IPR001406">
    <property type="entry name" value="PsdUridine_synth_TruA"/>
</dbReference>
<dbReference type="InterPro" id="IPR020097">
    <property type="entry name" value="PsdUridine_synth_TruA_a/b_dom"/>
</dbReference>
<dbReference type="InterPro" id="IPR020095">
    <property type="entry name" value="PsdUridine_synth_TruA_C"/>
</dbReference>
<dbReference type="InterPro" id="IPR020094">
    <property type="entry name" value="TruA/RsuA/RluB/E/F_N"/>
</dbReference>
<dbReference type="NCBIfam" id="TIGR00071">
    <property type="entry name" value="hisT_truA"/>
    <property type="match status" value="1"/>
</dbReference>
<dbReference type="PANTHER" id="PTHR11142">
    <property type="entry name" value="PSEUDOURIDYLATE SYNTHASE"/>
    <property type="match status" value="1"/>
</dbReference>
<dbReference type="PANTHER" id="PTHR11142:SF0">
    <property type="entry name" value="TRNA PSEUDOURIDINE SYNTHASE-LIKE 1"/>
    <property type="match status" value="1"/>
</dbReference>
<dbReference type="Pfam" id="PF01416">
    <property type="entry name" value="PseudoU_synth_1"/>
    <property type="match status" value="2"/>
</dbReference>
<dbReference type="PIRSF" id="PIRSF001430">
    <property type="entry name" value="tRNA_psdUrid_synth"/>
    <property type="match status" value="1"/>
</dbReference>
<dbReference type="SUPFAM" id="SSF55120">
    <property type="entry name" value="Pseudouridine synthase"/>
    <property type="match status" value="1"/>
</dbReference>
<organism>
    <name type="scientific">Agrobacterium fabrum (strain C58 / ATCC 33970)</name>
    <name type="common">Agrobacterium tumefaciens (strain C58)</name>
    <dbReference type="NCBI Taxonomy" id="176299"/>
    <lineage>
        <taxon>Bacteria</taxon>
        <taxon>Pseudomonadati</taxon>
        <taxon>Pseudomonadota</taxon>
        <taxon>Alphaproteobacteria</taxon>
        <taxon>Hyphomicrobiales</taxon>
        <taxon>Rhizobiaceae</taxon>
        <taxon>Rhizobium/Agrobacterium group</taxon>
        <taxon>Agrobacterium</taxon>
        <taxon>Agrobacterium tumefaciens complex</taxon>
    </lineage>
</organism>
<keyword id="KW-0413">Isomerase</keyword>
<keyword id="KW-1185">Reference proteome</keyword>
<keyword id="KW-0819">tRNA processing</keyword>
<evidence type="ECO:0000255" key="1">
    <source>
        <dbReference type="HAMAP-Rule" id="MF_00171"/>
    </source>
</evidence>
<proteinExistence type="inferred from homology"/>
<sequence>MPRFRMTVEYDGTPYYGWQRQENGPSVQGALEAAVRSLTGESVSIRGAGRTDSGVHAVGQVAHIDLSRDWEPYKLRNALNAHLAMAGEAVAVLDAAAVTEDFDARFSALRRHYLYRIICRKSRLALEHKRAWWVSKDLDHERMHEAAQMLVGRHDFTTFRSVHCQANSPVRTLDRLDVTRNGDLIEIRATAQSFLHNQIRSFAGTLKLAGEGGMTPDDVRAALEARDRKACGPVAPPDGLYFMQVDYPDVIPPRRRPEIEMTEDAD</sequence>
<accession>Q8UIC9</accession>